<reference key="1">
    <citation type="journal article" date="2008" name="J. Bacteriol.">
        <title>Complete genome sequence of the soil actinomycete Kocuria rhizophila.</title>
        <authorList>
            <person name="Takarada H."/>
            <person name="Sekine M."/>
            <person name="Kosugi H."/>
            <person name="Matsuo Y."/>
            <person name="Fujisawa T."/>
            <person name="Omata S."/>
            <person name="Kishi E."/>
            <person name="Shimizu A."/>
            <person name="Tsukatani N."/>
            <person name="Tanikawa S."/>
            <person name="Fujita N."/>
            <person name="Harayama S."/>
        </authorList>
    </citation>
    <scope>NUCLEOTIDE SEQUENCE [LARGE SCALE GENOMIC DNA]</scope>
    <source>
        <strain>ATCC 9341 / DSM 348 / NBRC 103217 / DC2201</strain>
    </source>
</reference>
<protein>
    <recommendedName>
        <fullName evidence="1">Acetate kinase</fullName>
        <ecNumber evidence="1">2.7.2.1</ecNumber>
    </recommendedName>
    <alternativeName>
        <fullName evidence="1">Acetokinase</fullName>
    </alternativeName>
</protein>
<organism>
    <name type="scientific">Kocuria rhizophila (strain ATCC 9341 / DSM 348 / NBRC 103217 / DC2201)</name>
    <dbReference type="NCBI Taxonomy" id="378753"/>
    <lineage>
        <taxon>Bacteria</taxon>
        <taxon>Bacillati</taxon>
        <taxon>Actinomycetota</taxon>
        <taxon>Actinomycetes</taxon>
        <taxon>Micrococcales</taxon>
        <taxon>Micrococcaceae</taxon>
        <taxon>Kocuria</taxon>
    </lineage>
</organism>
<feature type="chain" id="PRO_1000089980" description="Acetate kinase">
    <location>
        <begin position="1"/>
        <end position="410"/>
    </location>
</feature>
<feature type="active site" description="Proton donor/acceptor" evidence="1">
    <location>
        <position position="155"/>
    </location>
</feature>
<feature type="binding site" evidence="1">
    <location>
        <position position="7"/>
    </location>
    <ligand>
        <name>Mg(2+)</name>
        <dbReference type="ChEBI" id="CHEBI:18420"/>
    </ligand>
</feature>
<feature type="binding site" evidence="1">
    <location>
        <position position="14"/>
    </location>
    <ligand>
        <name>ATP</name>
        <dbReference type="ChEBI" id="CHEBI:30616"/>
    </ligand>
</feature>
<feature type="binding site" evidence="1">
    <location>
        <position position="98"/>
    </location>
    <ligand>
        <name>substrate</name>
    </ligand>
</feature>
<feature type="binding site" evidence="1">
    <location>
        <begin position="215"/>
        <end position="219"/>
    </location>
    <ligand>
        <name>ATP</name>
        <dbReference type="ChEBI" id="CHEBI:30616"/>
    </ligand>
</feature>
<feature type="binding site" evidence="1">
    <location>
        <begin position="290"/>
        <end position="292"/>
    </location>
    <ligand>
        <name>ATP</name>
        <dbReference type="ChEBI" id="CHEBI:30616"/>
    </ligand>
</feature>
<feature type="binding site" evidence="1">
    <location>
        <begin position="338"/>
        <end position="342"/>
    </location>
    <ligand>
        <name>ATP</name>
        <dbReference type="ChEBI" id="CHEBI:30616"/>
    </ligand>
</feature>
<feature type="binding site" evidence="1">
    <location>
        <position position="392"/>
    </location>
    <ligand>
        <name>Mg(2+)</name>
        <dbReference type="ChEBI" id="CHEBI:18420"/>
    </ligand>
</feature>
<feature type="site" description="Transition state stabilizer" evidence="1">
    <location>
        <position position="187"/>
    </location>
</feature>
<feature type="site" description="Transition state stabilizer" evidence="1">
    <location>
        <position position="248"/>
    </location>
</feature>
<name>ACKA_KOCRD</name>
<accession>B2GKK6</accession>
<dbReference type="EC" id="2.7.2.1" evidence="1"/>
<dbReference type="EMBL" id="AP009152">
    <property type="protein sequence ID" value="BAG28497.1"/>
    <property type="molecule type" value="Genomic_DNA"/>
</dbReference>
<dbReference type="RefSeq" id="WP_012397224.1">
    <property type="nucleotide sequence ID" value="NC_010617.1"/>
</dbReference>
<dbReference type="SMR" id="B2GKK6"/>
<dbReference type="STRING" id="378753.KRH_01500"/>
<dbReference type="KEGG" id="krh:KRH_01500"/>
<dbReference type="eggNOG" id="COG0282">
    <property type="taxonomic scope" value="Bacteria"/>
</dbReference>
<dbReference type="HOGENOM" id="CLU_020352_0_1_11"/>
<dbReference type="OrthoDB" id="9802453at2"/>
<dbReference type="UniPathway" id="UPA00340">
    <property type="reaction ID" value="UER00458"/>
</dbReference>
<dbReference type="Proteomes" id="UP000008838">
    <property type="component" value="Chromosome"/>
</dbReference>
<dbReference type="GO" id="GO:0005737">
    <property type="term" value="C:cytoplasm"/>
    <property type="evidence" value="ECO:0007669"/>
    <property type="project" value="UniProtKB-SubCell"/>
</dbReference>
<dbReference type="GO" id="GO:0008776">
    <property type="term" value="F:acetate kinase activity"/>
    <property type="evidence" value="ECO:0007669"/>
    <property type="project" value="UniProtKB-UniRule"/>
</dbReference>
<dbReference type="GO" id="GO:0005524">
    <property type="term" value="F:ATP binding"/>
    <property type="evidence" value="ECO:0007669"/>
    <property type="project" value="UniProtKB-KW"/>
</dbReference>
<dbReference type="GO" id="GO:0000287">
    <property type="term" value="F:magnesium ion binding"/>
    <property type="evidence" value="ECO:0007669"/>
    <property type="project" value="UniProtKB-UniRule"/>
</dbReference>
<dbReference type="GO" id="GO:0006083">
    <property type="term" value="P:acetate metabolic process"/>
    <property type="evidence" value="ECO:0007669"/>
    <property type="project" value="TreeGrafter"/>
</dbReference>
<dbReference type="GO" id="GO:0006085">
    <property type="term" value="P:acetyl-CoA biosynthetic process"/>
    <property type="evidence" value="ECO:0007669"/>
    <property type="project" value="UniProtKB-UniRule"/>
</dbReference>
<dbReference type="CDD" id="cd24010">
    <property type="entry name" value="ASKHA_NBD_AcK_PK"/>
    <property type="match status" value="1"/>
</dbReference>
<dbReference type="Gene3D" id="3.30.420.40">
    <property type="match status" value="2"/>
</dbReference>
<dbReference type="HAMAP" id="MF_00020">
    <property type="entry name" value="Acetate_kinase"/>
    <property type="match status" value="1"/>
</dbReference>
<dbReference type="InterPro" id="IPR004372">
    <property type="entry name" value="Ac/propionate_kinase"/>
</dbReference>
<dbReference type="InterPro" id="IPR000890">
    <property type="entry name" value="Aliphatic_acid_kin_short-chain"/>
</dbReference>
<dbReference type="InterPro" id="IPR023865">
    <property type="entry name" value="Aliphatic_acid_kinase_CS"/>
</dbReference>
<dbReference type="InterPro" id="IPR043129">
    <property type="entry name" value="ATPase_NBD"/>
</dbReference>
<dbReference type="NCBIfam" id="TIGR00016">
    <property type="entry name" value="ackA"/>
    <property type="match status" value="1"/>
</dbReference>
<dbReference type="PANTHER" id="PTHR21060">
    <property type="entry name" value="ACETATE KINASE"/>
    <property type="match status" value="1"/>
</dbReference>
<dbReference type="PANTHER" id="PTHR21060:SF15">
    <property type="entry name" value="ACETATE KINASE-RELATED"/>
    <property type="match status" value="1"/>
</dbReference>
<dbReference type="Pfam" id="PF00871">
    <property type="entry name" value="Acetate_kinase"/>
    <property type="match status" value="1"/>
</dbReference>
<dbReference type="PIRSF" id="PIRSF000722">
    <property type="entry name" value="Acetate_prop_kin"/>
    <property type="match status" value="1"/>
</dbReference>
<dbReference type="PRINTS" id="PR00471">
    <property type="entry name" value="ACETATEKNASE"/>
</dbReference>
<dbReference type="SUPFAM" id="SSF53067">
    <property type="entry name" value="Actin-like ATPase domain"/>
    <property type="match status" value="2"/>
</dbReference>
<dbReference type="PROSITE" id="PS01075">
    <property type="entry name" value="ACETATE_KINASE_1"/>
    <property type="match status" value="1"/>
</dbReference>
<dbReference type="PROSITE" id="PS01076">
    <property type="entry name" value="ACETATE_KINASE_2"/>
    <property type="match status" value="1"/>
</dbReference>
<evidence type="ECO:0000255" key="1">
    <source>
        <dbReference type="HAMAP-Rule" id="MF_00020"/>
    </source>
</evidence>
<comment type="function">
    <text evidence="1">Catalyzes the formation of acetyl phosphate from acetate and ATP. Can also catalyze the reverse reaction.</text>
</comment>
<comment type="catalytic activity">
    <reaction evidence="1">
        <text>acetate + ATP = acetyl phosphate + ADP</text>
        <dbReference type="Rhea" id="RHEA:11352"/>
        <dbReference type="ChEBI" id="CHEBI:22191"/>
        <dbReference type="ChEBI" id="CHEBI:30089"/>
        <dbReference type="ChEBI" id="CHEBI:30616"/>
        <dbReference type="ChEBI" id="CHEBI:456216"/>
        <dbReference type="EC" id="2.7.2.1"/>
    </reaction>
</comment>
<comment type="cofactor">
    <cofactor evidence="1">
        <name>Mg(2+)</name>
        <dbReference type="ChEBI" id="CHEBI:18420"/>
    </cofactor>
    <cofactor evidence="1">
        <name>Mn(2+)</name>
        <dbReference type="ChEBI" id="CHEBI:29035"/>
    </cofactor>
    <text evidence="1">Mg(2+). Can also accept Mn(2+).</text>
</comment>
<comment type="pathway">
    <text evidence="1">Metabolic intermediate biosynthesis; acetyl-CoA biosynthesis; acetyl-CoA from acetate: step 1/2.</text>
</comment>
<comment type="subunit">
    <text evidence="1">Homodimer.</text>
</comment>
<comment type="subcellular location">
    <subcellularLocation>
        <location evidence="1">Cytoplasm</location>
    </subcellularLocation>
</comment>
<comment type="similarity">
    <text evidence="1">Belongs to the acetokinase family.</text>
</comment>
<keyword id="KW-0067">ATP-binding</keyword>
<keyword id="KW-0963">Cytoplasm</keyword>
<keyword id="KW-0418">Kinase</keyword>
<keyword id="KW-0460">Magnesium</keyword>
<keyword id="KW-0479">Metal-binding</keyword>
<keyword id="KW-0547">Nucleotide-binding</keyword>
<keyword id="KW-1185">Reference proteome</keyword>
<keyword id="KW-0808">Transferase</keyword>
<proteinExistence type="inferred from homology"/>
<gene>
    <name evidence="1" type="primary">ackA</name>
    <name type="ordered locus">KRH_01500</name>
</gene>
<sequence length="410" mass="44230">MLVLVVNCGSSSIKYQVREVTPEGSEPSPYTSSMPAINENIPLATATAGMAGDQVITKGLIENIGTSEIQDHTQALEILARRLDEELGGRTIDAAGHRVVHGGERFSAPVLVNNEIIRAIERLAPLAPLHNPAHALGLRAIQKTYPGMPQVCVFDTAFHRTMPEKAWRYAIPEQWYEMDGMRRYGFHGTSHDYVTGKACEFLGIPREQFNTVVAHLGNGASVTAIREGRSYDTSMGYTPLAGLVMGTRSGDLDPSVVTAMLERKPGMSAQDMNRILNNESGLQGICGDSDMRAVEQRADSGDERAQLALDMAAYRLAKYIGGYHVAVGGAQALIFTAGIGENSPGFRALVCDQLGALGVRLDASRNEHPEGNVARISFPDSAVEVLVVATDEERAIAEATAALVWERVKN</sequence>